<comment type="function">
    <text evidence="1">Functions in the biosynthesis of branched-chain amino acids. Catalyzes the dehydration of (2R,3R)-2,3-dihydroxy-3-methylpentanoate (2,3-dihydroxy-3-methylvalerate) into 2-oxo-3-methylpentanoate (2-oxo-3-methylvalerate) and of (2R)-2,3-dihydroxy-3-methylbutanoate (2,3-dihydroxyisovalerate) into 2-oxo-3-methylbutanoate (2-oxoisovalerate), the penultimate precursor to L-isoleucine and L-valine, respectively.</text>
</comment>
<comment type="catalytic activity">
    <reaction evidence="1">
        <text>(2R)-2,3-dihydroxy-3-methylbutanoate = 3-methyl-2-oxobutanoate + H2O</text>
        <dbReference type="Rhea" id="RHEA:24809"/>
        <dbReference type="ChEBI" id="CHEBI:11851"/>
        <dbReference type="ChEBI" id="CHEBI:15377"/>
        <dbReference type="ChEBI" id="CHEBI:49072"/>
        <dbReference type="EC" id="4.2.1.9"/>
    </reaction>
    <physiologicalReaction direction="left-to-right" evidence="1">
        <dbReference type="Rhea" id="RHEA:24810"/>
    </physiologicalReaction>
</comment>
<comment type="catalytic activity">
    <reaction evidence="1">
        <text>(2R,3R)-2,3-dihydroxy-3-methylpentanoate = (S)-3-methyl-2-oxopentanoate + H2O</text>
        <dbReference type="Rhea" id="RHEA:27694"/>
        <dbReference type="ChEBI" id="CHEBI:15377"/>
        <dbReference type="ChEBI" id="CHEBI:35146"/>
        <dbReference type="ChEBI" id="CHEBI:49258"/>
        <dbReference type="EC" id="4.2.1.9"/>
    </reaction>
    <physiologicalReaction direction="left-to-right" evidence="1">
        <dbReference type="Rhea" id="RHEA:27695"/>
    </physiologicalReaction>
</comment>
<comment type="cofactor">
    <cofactor evidence="1">
        <name>[2Fe-2S] cluster</name>
        <dbReference type="ChEBI" id="CHEBI:190135"/>
    </cofactor>
    <text evidence="1">Binds 1 [2Fe-2S] cluster per subunit. This cluster acts as a Lewis acid cofactor.</text>
</comment>
<comment type="cofactor">
    <cofactor evidence="1">
        <name>Mg(2+)</name>
        <dbReference type="ChEBI" id="CHEBI:18420"/>
    </cofactor>
</comment>
<comment type="pathway">
    <text evidence="1">Amino-acid biosynthesis; L-isoleucine biosynthesis; L-isoleucine from 2-oxobutanoate: step 3/4.</text>
</comment>
<comment type="pathway">
    <text evidence="1">Amino-acid biosynthesis; L-valine biosynthesis; L-valine from pyruvate: step 3/4.</text>
</comment>
<comment type="subunit">
    <text evidence="1">Homodimer.</text>
</comment>
<comment type="similarity">
    <text evidence="1">Belongs to the IlvD/Edd family.</text>
</comment>
<keyword id="KW-0001">2Fe-2S</keyword>
<keyword id="KW-0028">Amino-acid biosynthesis</keyword>
<keyword id="KW-0100">Branched-chain amino acid biosynthesis</keyword>
<keyword id="KW-0408">Iron</keyword>
<keyword id="KW-0411">Iron-sulfur</keyword>
<keyword id="KW-0456">Lyase</keyword>
<keyword id="KW-0460">Magnesium</keyword>
<keyword id="KW-0479">Metal-binding</keyword>
<keyword id="KW-1185">Reference proteome</keyword>
<accession>A8LKN5</accession>
<gene>
    <name evidence="1" type="primary">ilvD</name>
    <name type="ordered locus">Dshi_0129</name>
</gene>
<reference key="1">
    <citation type="journal article" date="2010" name="ISME J.">
        <title>The complete genome sequence of the algal symbiont Dinoroseobacter shibae: a hitchhiker's guide to life in the sea.</title>
        <authorList>
            <person name="Wagner-Dobler I."/>
            <person name="Ballhausen B."/>
            <person name="Berger M."/>
            <person name="Brinkhoff T."/>
            <person name="Buchholz I."/>
            <person name="Bunk B."/>
            <person name="Cypionka H."/>
            <person name="Daniel R."/>
            <person name="Drepper T."/>
            <person name="Gerdts G."/>
            <person name="Hahnke S."/>
            <person name="Han C."/>
            <person name="Jahn D."/>
            <person name="Kalhoefer D."/>
            <person name="Kiss H."/>
            <person name="Klenk H.P."/>
            <person name="Kyrpides N."/>
            <person name="Liebl W."/>
            <person name="Liesegang H."/>
            <person name="Meincke L."/>
            <person name="Pati A."/>
            <person name="Petersen J."/>
            <person name="Piekarski T."/>
            <person name="Pommerenke C."/>
            <person name="Pradella S."/>
            <person name="Pukall R."/>
            <person name="Rabus R."/>
            <person name="Stackebrandt E."/>
            <person name="Thole S."/>
            <person name="Thompson L."/>
            <person name="Tielen P."/>
            <person name="Tomasch J."/>
            <person name="von Jan M."/>
            <person name="Wanphrut N."/>
            <person name="Wichels A."/>
            <person name="Zech H."/>
            <person name="Simon M."/>
        </authorList>
    </citation>
    <scope>NUCLEOTIDE SEQUENCE [LARGE SCALE GENOMIC DNA]</scope>
    <source>
        <strain>DSM 16493 / NCIMB 14021 / DFL 12</strain>
    </source>
</reference>
<evidence type="ECO:0000255" key="1">
    <source>
        <dbReference type="HAMAP-Rule" id="MF_00012"/>
    </source>
</evidence>
<evidence type="ECO:0000256" key="2">
    <source>
        <dbReference type="SAM" id="MobiDB-lite"/>
    </source>
</evidence>
<proteinExistence type="inferred from homology"/>
<name>ILVD_DINSH</name>
<feature type="chain" id="PRO_1000073975" description="Dihydroxy-acid dehydratase">
    <location>
        <begin position="1"/>
        <end position="577"/>
    </location>
</feature>
<feature type="region of interest" description="Disordered" evidence="2">
    <location>
        <begin position="1"/>
        <end position="22"/>
    </location>
</feature>
<feature type="compositionally biased region" description="Basic and acidic residues" evidence="2">
    <location>
        <begin position="1"/>
        <end position="10"/>
    </location>
</feature>
<feature type="active site" description="Proton acceptor" evidence="1">
    <location>
        <position position="479"/>
    </location>
</feature>
<feature type="binding site" evidence="1">
    <location>
        <position position="56"/>
    </location>
    <ligand>
        <name>[2Fe-2S] cluster</name>
        <dbReference type="ChEBI" id="CHEBI:190135"/>
    </ligand>
</feature>
<feature type="binding site" evidence="1">
    <location>
        <position position="88"/>
    </location>
    <ligand>
        <name>Mg(2+)</name>
        <dbReference type="ChEBI" id="CHEBI:18420"/>
    </ligand>
</feature>
<feature type="binding site" evidence="1">
    <location>
        <position position="129"/>
    </location>
    <ligand>
        <name>[2Fe-2S] cluster</name>
        <dbReference type="ChEBI" id="CHEBI:190135"/>
    </ligand>
</feature>
<feature type="binding site" evidence="1">
    <location>
        <position position="130"/>
    </location>
    <ligand>
        <name>Mg(2+)</name>
        <dbReference type="ChEBI" id="CHEBI:18420"/>
    </ligand>
</feature>
<feature type="binding site" description="via carbamate group" evidence="1">
    <location>
        <position position="131"/>
    </location>
    <ligand>
        <name>Mg(2+)</name>
        <dbReference type="ChEBI" id="CHEBI:18420"/>
    </ligand>
</feature>
<feature type="binding site" evidence="1">
    <location>
        <position position="201"/>
    </location>
    <ligand>
        <name>[2Fe-2S] cluster</name>
        <dbReference type="ChEBI" id="CHEBI:190135"/>
    </ligand>
</feature>
<feature type="binding site" evidence="1">
    <location>
        <position position="453"/>
    </location>
    <ligand>
        <name>Mg(2+)</name>
        <dbReference type="ChEBI" id="CHEBI:18420"/>
    </ligand>
</feature>
<feature type="modified residue" description="N6-carboxylysine" evidence="1">
    <location>
        <position position="131"/>
    </location>
</feature>
<protein>
    <recommendedName>
        <fullName evidence="1">Dihydroxy-acid dehydratase</fullName>
        <shortName evidence="1">DAD</shortName>
        <ecNumber evidence="1">4.2.1.9</ecNumber>
    </recommendedName>
</protein>
<sequence>MLKRSFDKSKLPSRHVTEGPSRAPHRSYYYAMGMTEEEIHQPLVGVATCWNEAAPCNIALSRQAQAVKMGVKQASGTPREFTTITVTDGIAMGHEGMRSSLASREAIADTVELTMRGHCYDAIVGLAGCDKSLPGMMMAMVRLNVPSVFIYGGSILPGRLNGEDVTVQDVFEAVGKHQAGNYTDAELEVLERVACPSAGACGGQFTANTMACVSEAIGLALPNSAGAPAPYESRDQYGEASGRAVMDLIEKGIRARDIVTRKSLENAARIVACTGGSTNAGLHLPAIAHEAGIEFTLQDVCDIFRDTPYFVDLKPGGKYVAKDMYEAGGVPVVMRELRRAGLIHEDCMTVTGYSIGEELDKVTLEADGRVIYPVDTPLSTTGGVVGLEGNLAPEGAIVKIAGMSDDQLVFTGPARVFECEEDAFEAVQNRAYAEGDVFVIRNEGPAGGPGMREMLATTAALSGQGMGKKVALITDGRFSGATRGFCVGHVGPEAAHGGPIAMLKDGDMITIDALKGELSVALSEDELAARKDAWSGPRETIYASGALWKYAQLVGGARLGAVTHPGAKDEKHIYADL</sequence>
<organism>
    <name type="scientific">Dinoroseobacter shibae (strain DSM 16493 / NCIMB 14021 / DFL 12)</name>
    <dbReference type="NCBI Taxonomy" id="398580"/>
    <lineage>
        <taxon>Bacteria</taxon>
        <taxon>Pseudomonadati</taxon>
        <taxon>Pseudomonadota</taxon>
        <taxon>Alphaproteobacteria</taxon>
        <taxon>Rhodobacterales</taxon>
        <taxon>Roseobacteraceae</taxon>
        <taxon>Dinoroseobacter</taxon>
    </lineage>
</organism>
<dbReference type="EC" id="4.2.1.9" evidence="1"/>
<dbReference type="EMBL" id="CP000830">
    <property type="protein sequence ID" value="ABV91878.1"/>
    <property type="molecule type" value="Genomic_DNA"/>
</dbReference>
<dbReference type="RefSeq" id="WP_012176811.1">
    <property type="nucleotide sequence ID" value="NC_009952.1"/>
</dbReference>
<dbReference type="SMR" id="A8LKN5"/>
<dbReference type="STRING" id="398580.Dshi_0129"/>
<dbReference type="KEGG" id="dsh:Dshi_0129"/>
<dbReference type="eggNOG" id="COG0129">
    <property type="taxonomic scope" value="Bacteria"/>
</dbReference>
<dbReference type="HOGENOM" id="CLU_014271_4_2_5"/>
<dbReference type="OrthoDB" id="9807077at2"/>
<dbReference type="UniPathway" id="UPA00047">
    <property type="reaction ID" value="UER00057"/>
</dbReference>
<dbReference type="UniPathway" id="UPA00049">
    <property type="reaction ID" value="UER00061"/>
</dbReference>
<dbReference type="Proteomes" id="UP000006833">
    <property type="component" value="Chromosome"/>
</dbReference>
<dbReference type="GO" id="GO:0051537">
    <property type="term" value="F:2 iron, 2 sulfur cluster binding"/>
    <property type="evidence" value="ECO:0007669"/>
    <property type="project" value="UniProtKB-UniRule"/>
</dbReference>
<dbReference type="GO" id="GO:0004160">
    <property type="term" value="F:dihydroxy-acid dehydratase activity"/>
    <property type="evidence" value="ECO:0007669"/>
    <property type="project" value="UniProtKB-UniRule"/>
</dbReference>
<dbReference type="GO" id="GO:0000287">
    <property type="term" value="F:magnesium ion binding"/>
    <property type="evidence" value="ECO:0007669"/>
    <property type="project" value="UniProtKB-UniRule"/>
</dbReference>
<dbReference type="GO" id="GO:0009097">
    <property type="term" value="P:isoleucine biosynthetic process"/>
    <property type="evidence" value="ECO:0007669"/>
    <property type="project" value="UniProtKB-UniRule"/>
</dbReference>
<dbReference type="GO" id="GO:0009099">
    <property type="term" value="P:L-valine biosynthetic process"/>
    <property type="evidence" value="ECO:0007669"/>
    <property type="project" value="UniProtKB-UniRule"/>
</dbReference>
<dbReference type="FunFam" id="3.50.30.80:FF:000001">
    <property type="entry name" value="Dihydroxy-acid dehydratase"/>
    <property type="match status" value="1"/>
</dbReference>
<dbReference type="Gene3D" id="3.50.30.80">
    <property type="entry name" value="IlvD/EDD C-terminal domain-like"/>
    <property type="match status" value="1"/>
</dbReference>
<dbReference type="HAMAP" id="MF_00012">
    <property type="entry name" value="IlvD"/>
    <property type="match status" value="1"/>
</dbReference>
<dbReference type="InterPro" id="IPR050165">
    <property type="entry name" value="DHAD_IlvD/Edd"/>
</dbReference>
<dbReference type="InterPro" id="IPR042096">
    <property type="entry name" value="Dihydro-acid_dehy_C"/>
</dbReference>
<dbReference type="InterPro" id="IPR004404">
    <property type="entry name" value="DihydroxyA_deHydtase"/>
</dbReference>
<dbReference type="InterPro" id="IPR020558">
    <property type="entry name" value="DiOHA_6PGluconate_deHydtase_CS"/>
</dbReference>
<dbReference type="InterPro" id="IPR056740">
    <property type="entry name" value="ILV_EDD_C"/>
</dbReference>
<dbReference type="InterPro" id="IPR000581">
    <property type="entry name" value="ILV_EDD_N"/>
</dbReference>
<dbReference type="InterPro" id="IPR037237">
    <property type="entry name" value="IlvD/EDD_N"/>
</dbReference>
<dbReference type="NCBIfam" id="TIGR00110">
    <property type="entry name" value="ilvD"/>
    <property type="match status" value="1"/>
</dbReference>
<dbReference type="NCBIfam" id="NF002068">
    <property type="entry name" value="PRK00911.1"/>
    <property type="match status" value="1"/>
</dbReference>
<dbReference type="PANTHER" id="PTHR21000">
    <property type="entry name" value="DIHYDROXY-ACID DEHYDRATASE DAD"/>
    <property type="match status" value="1"/>
</dbReference>
<dbReference type="PANTHER" id="PTHR21000:SF5">
    <property type="entry name" value="DIHYDROXY-ACID DEHYDRATASE, MITOCHONDRIAL"/>
    <property type="match status" value="1"/>
</dbReference>
<dbReference type="Pfam" id="PF24877">
    <property type="entry name" value="ILV_EDD_C"/>
    <property type="match status" value="1"/>
</dbReference>
<dbReference type="Pfam" id="PF00920">
    <property type="entry name" value="ILVD_EDD_N"/>
    <property type="match status" value="1"/>
</dbReference>
<dbReference type="SUPFAM" id="SSF143975">
    <property type="entry name" value="IlvD/EDD N-terminal domain-like"/>
    <property type="match status" value="1"/>
</dbReference>
<dbReference type="SUPFAM" id="SSF52016">
    <property type="entry name" value="LeuD/IlvD-like"/>
    <property type="match status" value="1"/>
</dbReference>
<dbReference type="PROSITE" id="PS00886">
    <property type="entry name" value="ILVD_EDD_1"/>
    <property type="match status" value="1"/>
</dbReference>
<dbReference type="PROSITE" id="PS00887">
    <property type="entry name" value="ILVD_EDD_2"/>
    <property type="match status" value="1"/>
</dbReference>